<accession>Q9MUN7</accession>
<comment type="function">
    <text evidence="1">Contributes to K(+)/H(+) antiport activity by supporting proton efflux to control proton extrusion and homeostasis in chloroplasts in a light-dependent manner to modulate photosynthesis. Prevents excessive induction of non-photochemical quenching (NPQ) under continuous-light conditions. Indirectly promotes efficient inorganic carbon uptake into chloroplasts.</text>
</comment>
<comment type="catalytic activity">
    <reaction evidence="1">
        <text>K(+)(in) + H(+)(out) = K(+)(out) + H(+)(in)</text>
        <dbReference type="Rhea" id="RHEA:29467"/>
        <dbReference type="ChEBI" id="CHEBI:15378"/>
        <dbReference type="ChEBI" id="CHEBI:29103"/>
    </reaction>
</comment>
<comment type="subcellular location">
    <subcellularLocation>
        <location evidence="1">Plastid</location>
        <location evidence="1">Chloroplast inner membrane</location>
        <topology evidence="1">Multi-pass membrane protein</topology>
    </subcellularLocation>
</comment>
<comment type="similarity">
    <text evidence="1 2">Belongs to the CemA family.</text>
</comment>
<comment type="sequence caution" evidence="2">
    <conflict type="frameshift">
        <sequence resource="EMBL-CDS" id="AAF43863"/>
    </conflict>
</comment>
<reference key="1">
    <citation type="journal article" date="2000" name="Nature">
        <title>Ancestral chloroplast genome in Mesostigma viride reveals an early branch of green plant evolution.</title>
        <authorList>
            <person name="Lemieux C."/>
            <person name="Otis C."/>
            <person name="Turmel M."/>
        </authorList>
    </citation>
    <scope>NUCLEOTIDE SEQUENCE [LARGE SCALE GENOMIC DNA]</scope>
    <source>
        <strain>NIES-296 / KY-14 / CCMP 2046</strain>
    </source>
</reference>
<keyword id="KW-0050">Antiport</keyword>
<keyword id="KW-0150">Chloroplast</keyword>
<keyword id="KW-0375">Hydrogen ion transport</keyword>
<keyword id="KW-0406">Ion transport</keyword>
<keyword id="KW-0472">Membrane</keyword>
<keyword id="KW-0934">Plastid</keyword>
<keyword id="KW-1001">Plastid inner membrane</keyword>
<keyword id="KW-0630">Potassium</keyword>
<keyword id="KW-0633">Potassium transport</keyword>
<keyword id="KW-0812">Transmembrane</keyword>
<keyword id="KW-1133">Transmembrane helix</keyword>
<keyword id="KW-0813">Transport</keyword>
<organism>
    <name type="scientific">Mesostigma viride</name>
    <name type="common">Green alga</name>
    <dbReference type="NCBI Taxonomy" id="41882"/>
    <lineage>
        <taxon>Eukaryota</taxon>
        <taxon>Viridiplantae</taxon>
        <taxon>Streptophyta</taxon>
        <taxon>Mesostigmatophyceae</taxon>
        <taxon>Mesostigmatales</taxon>
        <taxon>Mesostigmataceae</taxon>
        <taxon>Mesostigma</taxon>
    </lineage>
</organism>
<gene>
    <name evidence="1" type="primary">cemA</name>
</gene>
<name>CEMA_MESVI</name>
<evidence type="ECO:0000255" key="1">
    <source>
        <dbReference type="HAMAP-Rule" id="MF_01308"/>
    </source>
</evidence>
<evidence type="ECO:0000305" key="2"/>
<dbReference type="EMBL" id="AF166114">
    <property type="protein sequence ID" value="AAF43863.1"/>
    <property type="status" value="ALT_FRAME"/>
    <property type="molecule type" value="Genomic_DNA"/>
</dbReference>
<dbReference type="RefSeq" id="NP_038423.2">
    <property type="nucleotide sequence ID" value="NC_002186.1"/>
</dbReference>
<dbReference type="GeneID" id="800996"/>
<dbReference type="GO" id="GO:0009706">
    <property type="term" value="C:chloroplast inner membrane"/>
    <property type="evidence" value="ECO:0007669"/>
    <property type="project" value="UniProtKB-SubCell"/>
</dbReference>
<dbReference type="GO" id="GO:0015297">
    <property type="term" value="F:antiporter activity"/>
    <property type="evidence" value="ECO:0007669"/>
    <property type="project" value="UniProtKB-KW"/>
</dbReference>
<dbReference type="GO" id="GO:0015078">
    <property type="term" value="F:proton transmembrane transporter activity"/>
    <property type="evidence" value="ECO:0007669"/>
    <property type="project" value="UniProtKB-UniRule"/>
</dbReference>
<dbReference type="GO" id="GO:0006813">
    <property type="term" value="P:potassium ion transport"/>
    <property type="evidence" value="ECO:0007669"/>
    <property type="project" value="UniProtKB-UniRule"/>
</dbReference>
<dbReference type="HAMAP" id="MF_01308">
    <property type="entry name" value="CemA_PxcA"/>
    <property type="match status" value="1"/>
</dbReference>
<dbReference type="InterPro" id="IPR004282">
    <property type="entry name" value="CemA"/>
</dbReference>
<dbReference type="PANTHER" id="PTHR33650:SF2">
    <property type="entry name" value="CHLOROPLAST ENVELOPE MEMBRANE PROTEIN"/>
    <property type="match status" value="1"/>
</dbReference>
<dbReference type="PANTHER" id="PTHR33650">
    <property type="entry name" value="CHLOROPLAST ENVELOPE MEMBRANE PROTEIN-RELATED"/>
    <property type="match status" value="1"/>
</dbReference>
<dbReference type="Pfam" id="PF03040">
    <property type="entry name" value="CemA"/>
    <property type="match status" value="1"/>
</dbReference>
<proteinExistence type="inferred from homology"/>
<protein>
    <recommendedName>
        <fullName evidence="1">Potassium/proton antiporter CemA</fullName>
    </recommendedName>
    <alternativeName>
        <fullName evidence="1">Chloroplast envelope membrane protein A</fullName>
        <shortName evidence="1">CemA</shortName>
    </alternativeName>
</protein>
<feature type="chain" id="PRO_0000216648" description="Potassium/proton antiporter CemA">
    <location>
        <begin position="1"/>
        <end position="236"/>
    </location>
</feature>
<feature type="transmembrane region" description="Helical" evidence="1">
    <location>
        <begin position="18"/>
        <end position="38"/>
    </location>
</feature>
<feature type="transmembrane region" description="Helical" evidence="1">
    <location>
        <begin position="114"/>
        <end position="134"/>
    </location>
</feature>
<feature type="transmembrane region" description="Helical" evidence="1">
    <location>
        <begin position="161"/>
        <end position="181"/>
    </location>
</feature>
<feature type="transmembrane region" description="Helical" evidence="1">
    <location>
        <begin position="196"/>
        <end position="216"/>
    </location>
</feature>
<geneLocation type="chloroplast"/>
<sequence>MINNQESLRSQTFFCIKYIISLSFFFILIYQLLNFLVLRPYAEYLWNHYQTDVFLNSSQEERIFAKLQNFEEEMQFDMLISYTYPLNPQVLHKEMEEKAFELAHMSNNESINSIAHVFTDLLIAFLIFCLLINAKKEIAIIQTYIDQYIYSLTDAKKSFFLILFTDIFVGFHSSHGWKILIELCLTHLGLPENKGFIFLFVATFPVILDTLFKYWIFLYLNRISPSAVATFNNMNE</sequence>